<name>RSMH_ECOBD</name>
<comment type="function">
    <text evidence="1">Specifically methylates the N4 position of cytidine in position 1402 (C1402) of 16S rRNA.</text>
</comment>
<comment type="catalytic activity">
    <reaction evidence="1">
        <text>cytidine(1402) in 16S rRNA + S-adenosyl-L-methionine = N(4)-methylcytidine(1402) in 16S rRNA + S-adenosyl-L-homocysteine + H(+)</text>
        <dbReference type="Rhea" id="RHEA:42928"/>
        <dbReference type="Rhea" id="RHEA-COMP:10286"/>
        <dbReference type="Rhea" id="RHEA-COMP:10287"/>
        <dbReference type="ChEBI" id="CHEBI:15378"/>
        <dbReference type="ChEBI" id="CHEBI:57856"/>
        <dbReference type="ChEBI" id="CHEBI:59789"/>
        <dbReference type="ChEBI" id="CHEBI:74506"/>
        <dbReference type="ChEBI" id="CHEBI:82748"/>
        <dbReference type="EC" id="2.1.1.199"/>
    </reaction>
</comment>
<comment type="subcellular location">
    <subcellularLocation>
        <location evidence="1">Cytoplasm</location>
    </subcellularLocation>
</comment>
<comment type="similarity">
    <text evidence="1">Belongs to the methyltransferase superfamily. RsmH family.</text>
</comment>
<sequence>MMENYKHTTVLLDEAVNGLNIRPDGIYIDGTFGRGGHSRLILSQLGEEGRLLAIDRDPQAIAVAKTIDDPRFSIIHGPFSALGEYVAERDLIGKIDGILLDLGVSSPQLDDAERGFSFMRDGPLDMRMDPTRGQSAAEWLQTAEEADIAWVLKTYGEERFAKRIARAIVERNREQPMTRTKELAEVVAAATPVKDKFKHPATRTFQAVRIWVNSELEEIEQALKSSLNVLAPGGRLSIISFHSLEDRIVKRFMRENSRGPQVPAGLPMTEEQLKKLGGRQLRALGKLMPGEEEVAENPRARSSVLRIAERTNA</sequence>
<protein>
    <recommendedName>
        <fullName evidence="1">Ribosomal RNA small subunit methyltransferase H</fullName>
        <ecNumber evidence="1">2.1.1.199</ecNumber>
    </recommendedName>
    <alternativeName>
        <fullName evidence="1">16S rRNA m(4)C1402 methyltransferase</fullName>
    </alternativeName>
    <alternativeName>
        <fullName evidence="1">rRNA (cytosine-N(4)-)-methyltransferase RsmH</fullName>
    </alternativeName>
</protein>
<dbReference type="EC" id="2.1.1.199" evidence="1"/>
<dbReference type="EMBL" id="AM946981">
    <property type="protein sequence ID" value="CAQ30599.1"/>
    <property type="molecule type" value="Genomic_DNA"/>
</dbReference>
<dbReference type="EMBL" id="CP001665">
    <property type="protein sequence ID" value="ACT30534.1"/>
    <property type="molecule type" value="Genomic_DNA"/>
</dbReference>
<dbReference type="EMBL" id="CP001509">
    <property type="protein sequence ID" value="ACT41984.1"/>
    <property type="molecule type" value="Genomic_DNA"/>
</dbReference>
<dbReference type="RefSeq" id="WP_000970479.1">
    <property type="nucleotide sequence ID" value="NZ_JADXDS010000005.1"/>
</dbReference>
<dbReference type="SMR" id="C5W331"/>
<dbReference type="GeneID" id="86862592"/>
<dbReference type="KEGG" id="ebd:ECBD_3535"/>
<dbReference type="KEGG" id="ebe:B21_00082"/>
<dbReference type="KEGG" id="ebl:ECD_00083"/>
<dbReference type="PATRIC" id="fig|469008.15.peg.81"/>
<dbReference type="eggNOG" id="COG0275">
    <property type="taxonomic scope" value="Bacteria"/>
</dbReference>
<dbReference type="HOGENOM" id="CLU_038422_2_0_6"/>
<dbReference type="GO" id="GO:0005737">
    <property type="term" value="C:cytoplasm"/>
    <property type="evidence" value="ECO:0007669"/>
    <property type="project" value="UniProtKB-SubCell"/>
</dbReference>
<dbReference type="GO" id="GO:0071424">
    <property type="term" value="F:rRNA (cytosine-N4-)-methyltransferase activity"/>
    <property type="evidence" value="ECO:0007669"/>
    <property type="project" value="UniProtKB-UniRule"/>
</dbReference>
<dbReference type="GO" id="GO:0070475">
    <property type="term" value="P:rRNA base methylation"/>
    <property type="evidence" value="ECO:0007669"/>
    <property type="project" value="UniProtKB-UniRule"/>
</dbReference>
<dbReference type="FunFam" id="1.10.150.170:FF:000001">
    <property type="entry name" value="Ribosomal RNA small subunit methyltransferase H"/>
    <property type="match status" value="1"/>
</dbReference>
<dbReference type="Gene3D" id="1.10.150.170">
    <property type="entry name" value="Putative methyltransferase TM0872, insert domain"/>
    <property type="match status" value="1"/>
</dbReference>
<dbReference type="Gene3D" id="3.40.50.150">
    <property type="entry name" value="Vaccinia Virus protein VP39"/>
    <property type="match status" value="1"/>
</dbReference>
<dbReference type="HAMAP" id="MF_01007">
    <property type="entry name" value="16SrRNA_methyltr_H"/>
    <property type="match status" value="1"/>
</dbReference>
<dbReference type="InterPro" id="IPR002903">
    <property type="entry name" value="RsmH"/>
</dbReference>
<dbReference type="InterPro" id="IPR023397">
    <property type="entry name" value="SAM-dep_MeTrfase_MraW_recog"/>
</dbReference>
<dbReference type="InterPro" id="IPR029063">
    <property type="entry name" value="SAM-dependent_MTases_sf"/>
</dbReference>
<dbReference type="NCBIfam" id="TIGR00006">
    <property type="entry name" value="16S rRNA (cytosine(1402)-N(4))-methyltransferase RsmH"/>
    <property type="match status" value="1"/>
</dbReference>
<dbReference type="PANTHER" id="PTHR11265:SF0">
    <property type="entry name" value="12S RRNA N4-METHYLCYTIDINE METHYLTRANSFERASE"/>
    <property type="match status" value="1"/>
</dbReference>
<dbReference type="PANTHER" id="PTHR11265">
    <property type="entry name" value="S-ADENOSYL-METHYLTRANSFERASE MRAW"/>
    <property type="match status" value="1"/>
</dbReference>
<dbReference type="Pfam" id="PF01795">
    <property type="entry name" value="Methyltransf_5"/>
    <property type="match status" value="1"/>
</dbReference>
<dbReference type="PIRSF" id="PIRSF004486">
    <property type="entry name" value="MraW"/>
    <property type="match status" value="1"/>
</dbReference>
<dbReference type="SUPFAM" id="SSF81799">
    <property type="entry name" value="Putative methyltransferase TM0872, insert domain"/>
    <property type="match status" value="1"/>
</dbReference>
<dbReference type="SUPFAM" id="SSF53335">
    <property type="entry name" value="S-adenosyl-L-methionine-dependent methyltransferases"/>
    <property type="match status" value="1"/>
</dbReference>
<proteinExistence type="inferred from homology"/>
<reference key="1">
    <citation type="submission" date="2009-06" db="EMBL/GenBank/DDBJ databases">
        <title>Sequencing and gene expression analysis of Escherichia coli BL21.</title>
        <authorList>
            <person name="Leparc G."/>
            <person name="Striedner G."/>
            <person name="Bayer K."/>
            <person name="Kreil D."/>
            <person name="Krempl P.M."/>
        </authorList>
    </citation>
    <scope>NUCLEOTIDE SEQUENCE [LARGE SCALE GENOMIC DNA]</scope>
    <source>
        <strain>B / BL21-DE3</strain>
    </source>
</reference>
<reference key="2">
    <citation type="submission" date="2009-07" db="EMBL/GenBank/DDBJ databases">
        <title>Complete sequence of Escherichia coli BL21(DE3).</title>
        <authorList>
            <person name="Lucas S."/>
            <person name="Copeland A."/>
            <person name="Lapidus A."/>
            <person name="Glavina del Rio T."/>
            <person name="Dalin E."/>
            <person name="Tice H."/>
            <person name="Bruce D."/>
            <person name="Goodwin L."/>
            <person name="Pitluck S."/>
            <person name="LaButti K.M."/>
            <person name="Clum A."/>
            <person name="Larimer F."/>
            <person name="Land M."/>
            <person name="Hauser L."/>
            <person name="Kyrpides N."/>
            <person name="Anderson I."/>
            <person name="Sorek R."/>
            <person name="Rubin E."/>
        </authorList>
    </citation>
    <scope>NUCLEOTIDE SEQUENCE [LARGE SCALE GENOMIC DNA]</scope>
    <source>
        <strain>B / BL21-DE3</strain>
    </source>
</reference>
<reference key="3">
    <citation type="journal article" date="2009" name="J. Mol. Biol.">
        <title>Genome sequences of Escherichia coli B strains REL606 and BL21(DE3).</title>
        <authorList>
            <person name="Jeong H."/>
            <person name="Barbe V."/>
            <person name="Lee C.H."/>
            <person name="Vallenet D."/>
            <person name="Yu D.S."/>
            <person name="Choi S.H."/>
            <person name="Couloux A."/>
            <person name="Lee S.W."/>
            <person name="Yoon S.H."/>
            <person name="Cattolico L."/>
            <person name="Hur C.G."/>
            <person name="Park H.S."/>
            <person name="Segurens B."/>
            <person name="Kim S.C."/>
            <person name="Oh T.K."/>
            <person name="Lenski R.E."/>
            <person name="Studier F.W."/>
            <person name="Daegelen P."/>
            <person name="Kim J.F."/>
        </authorList>
    </citation>
    <scope>NUCLEOTIDE SEQUENCE [LARGE SCALE GENOMIC DNA]</scope>
    <source>
        <strain>B / BL21-DE3</strain>
    </source>
</reference>
<gene>
    <name evidence="1" type="primary">rsmH</name>
    <name type="synonym">mraW</name>
    <name type="ordered locus">ECBD_3535</name>
    <name type="ordered locus">ECD_00083</name>
    <name type="ordered locus">B21_00082</name>
</gene>
<keyword id="KW-0963">Cytoplasm</keyword>
<keyword id="KW-0489">Methyltransferase</keyword>
<keyword id="KW-0698">rRNA processing</keyword>
<keyword id="KW-0949">S-adenosyl-L-methionine</keyword>
<keyword id="KW-0808">Transferase</keyword>
<feature type="chain" id="PRO_0000386869" description="Ribosomal RNA small subunit methyltransferase H">
    <location>
        <begin position="1"/>
        <end position="313"/>
    </location>
</feature>
<feature type="binding site" evidence="1">
    <location>
        <begin position="35"/>
        <end position="37"/>
    </location>
    <ligand>
        <name>S-adenosyl-L-methionine</name>
        <dbReference type="ChEBI" id="CHEBI:59789"/>
    </ligand>
</feature>
<feature type="binding site" evidence="1">
    <location>
        <position position="55"/>
    </location>
    <ligand>
        <name>S-adenosyl-L-methionine</name>
        <dbReference type="ChEBI" id="CHEBI:59789"/>
    </ligand>
</feature>
<feature type="binding site" evidence="1">
    <location>
        <position position="79"/>
    </location>
    <ligand>
        <name>S-adenosyl-L-methionine</name>
        <dbReference type="ChEBI" id="CHEBI:59789"/>
    </ligand>
</feature>
<feature type="binding site" evidence="1">
    <location>
        <position position="101"/>
    </location>
    <ligand>
        <name>S-adenosyl-L-methionine</name>
        <dbReference type="ChEBI" id="CHEBI:59789"/>
    </ligand>
</feature>
<feature type="binding site" evidence="1">
    <location>
        <position position="108"/>
    </location>
    <ligand>
        <name>S-adenosyl-L-methionine</name>
        <dbReference type="ChEBI" id="CHEBI:59789"/>
    </ligand>
</feature>
<organism>
    <name type="scientific">Escherichia coli (strain B / BL21-DE3)</name>
    <dbReference type="NCBI Taxonomy" id="469008"/>
    <lineage>
        <taxon>Bacteria</taxon>
        <taxon>Pseudomonadati</taxon>
        <taxon>Pseudomonadota</taxon>
        <taxon>Gammaproteobacteria</taxon>
        <taxon>Enterobacterales</taxon>
        <taxon>Enterobacteriaceae</taxon>
        <taxon>Escherichia</taxon>
    </lineage>
</organism>
<evidence type="ECO:0000255" key="1">
    <source>
        <dbReference type="HAMAP-Rule" id="MF_01007"/>
    </source>
</evidence>
<accession>C5W331</accession>
<accession>C6EAX3</accession>